<protein>
    <recommendedName>
        <fullName evidence="1">Large ribosomal subunit protein uL4</fullName>
    </recommendedName>
    <alternativeName>
        <fullName evidence="3">50S ribosomal protein L4</fullName>
    </alternativeName>
</protein>
<accession>Q48VU8</accession>
<organism>
    <name type="scientific">Streptococcus pyogenes serotype M28 (strain MGAS6180)</name>
    <dbReference type="NCBI Taxonomy" id="319701"/>
    <lineage>
        <taxon>Bacteria</taxon>
        <taxon>Bacillati</taxon>
        <taxon>Bacillota</taxon>
        <taxon>Bacilli</taxon>
        <taxon>Lactobacillales</taxon>
        <taxon>Streptococcaceae</taxon>
        <taxon>Streptococcus</taxon>
    </lineage>
</organism>
<evidence type="ECO:0000255" key="1">
    <source>
        <dbReference type="HAMAP-Rule" id="MF_01328"/>
    </source>
</evidence>
<evidence type="ECO:0000256" key="2">
    <source>
        <dbReference type="SAM" id="MobiDB-lite"/>
    </source>
</evidence>
<evidence type="ECO:0000305" key="3"/>
<sequence length="207" mass="22125">MANVKLFDQTGKEVSSVELNDAIFGIEPNESVVFDVVISQRASLRQGTHAVKNRSAVSGGGRKPWRQKGTGRARQGSIRSPQWRGGGVVFGPTPRSYGYKLPQKVRRLALKSVYSAKVAEDKFVAVEGLSFAAPKTAEFAKVLSALSIDTKVLVLVEEGNEFAALSARNLPNVTVATAATASVLDIVNADKLLVTKEAISTIEEVLA</sequence>
<proteinExistence type="inferred from homology"/>
<feature type="chain" id="PRO_0000242444" description="Large ribosomal subunit protein uL4">
    <location>
        <begin position="1"/>
        <end position="207"/>
    </location>
</feature>
<feature type="region of interest" description="Disordered" evidence="2">
    <location>
        <begin position="49"/>
        <end position="78"/>
    </location>
</feature>
<dbReference type="EMBL" id="CP000056">
    <property type="protein sequence ID" value="AAX71158.1"/>
    <property type="molecule type" value="Genomic_DNA"/>
</dbReference>
<dbReference type="RefSeq" id="WP_002986657.1">
    <property type="nucleotide sequence ID" value="NC_007296.2"/>
</dbReference>
<dbReference type="SMR" id="Q48VU8"/>
<dbReference type="GeneID" id="83689572"/>
<dbReference type="KEGG" id="spb:M28_Spy0044"/>
<dbReference type="HOGENOM" id="CLU_041575_5_2_9"/>
<dbReference type="GO" id="GO:1990904">
    <property type="term" value="C:ribonucleoprotein complex"/>
    <property type="evidence" value="ECO:0007669"/>
    <property type="project" value="UniProtKB-KW"/>
</dbReference>
<dbReference type="GO" id="GO:0005840">
    <property type="term" value="C:ribosome"/>
    <property type="evidence" value="ECO:0007669"/>
    <property type="project" value="UniProtKB-KW"/>
</dbReference>
<dbReference type="GO" id="GO:0019843">
    <property type="term" value="F:rRNA binding"/>
    <property type="evidence" value="ECO:0007669"/>
    <property type="project" value="UniProtKB-UniRule"/>
</dbReference>
<dbReference type="GO" id="GO:0003735">
    <property type="term" value="F:structural constituent of ribosome"/>
    <property type="evidence" value="ECO:0007669"/>
    <property type="project" value="InterPro"/>
</dbReference>
<dbReference type="GO" id="GO:0006412">
    <property type="term" value="P:translation"/>
    <property type="evidence" value="ECO:0007669"/>
    <property type="project" value="UniProtKB-UniRule"/>
</dbReference>
<dbReference type="FunFam" id="3.40.1370.10:FF:000003">
    <property type="entry name" value="50S ribosomal protein L4"/>
    <property type="match status" value="1"/>
</dbReference>
<dbReference type="Gene3D" id="3.40.1370.10">
    <property type="match status" value="1"/>
</dbReference>
<dbReference type="HAMAP" id="MF_01328_B">
    <property type="entry name" value="Ribosomal_uL4_B"/>
    <property type="match status" value="1"/>
</dbReference>
<dbReference type="InterPro" id="IPR002136">
    <property type="entry name" value="Ribosomal_uL4"/>
</dbReference>
<dbReference type="InterPro" id="IPR013005">
    <property type="entry name" value="Ribosomal_uL4-like"/>
</dbReference>
<dbReference type="InterPro" id="IPR023574">
    <property type="entry name" value="Ribosomal_uL4_dom_sf"/>
</dbReference>
<dbReference type="NCBIfam" id="TIGR03953">
    <property type="entry name" value="rplD_bact"/>
    <property type="match status" value="1"/>
</dbReference>
<dbReference type="PANTHER" id="PTHR10746">
    <property type="entry name" value="50S RIBOSOMAL PROTEIN L4"/>
    <property type="match status" value="1"/>
</dbReference>
<dbReference type="PANTHER" id="PTHR10746:SF6">
    <property type="entry name" value="LARGE RIBOSOMAL SUBUNIT PROTEIN UL4M"/>
    <property type="match status" value="1"/>
</dbReference>
<dbReference type="Pfam" id="PF00573">
    <property type="entry name" value="Ribosomal_L4"/>
    <property type="match status" value="1"/>
</dbReference>
<dbReference type="SUPFAM" id="SSF52166">
    <property type="entry name" value="Ribosomal protein L4"/>
    <property type="match status" value="1"/>
</dbReference>
<reference key="1">
    <citation type="journal article" date="2005" name="J. Infect. Dis.">
        <title>Genome sequence of a serotype M28 strain of group A Streptococcus: potential new insights into puerperal sepsis and bacterial disease specificity.</title>
        <authorList>
            <person name="Green N.M."/>
            <person name="Zhang S."/>
            <person name="Porcella S.F."/>
            <person name="Nagiec M.J."/>
            <person name="Barbian K.D."/>
            <person name="Beres S.B."/>
            <person name="Lefebvre R.B."/>
            <person name="Musser J.M."/>
        </authorList>
    </citation>
    <scope>NUCLEOTIDE SEQUENCE [LARGE SCALE GENOMIC DNA]</scope>
    <source>
        <strain>MGAS6180</strain>
    </source>
</reference>
<name>RL4_STRPM</name>
<gene>
    <name evidence="1" type="primary">rplD</name>
    <name type="ordered locus">M28_Spy0044</name>
</gene>
<keyword id="KW-0687">Ribonucleoprotein</keyword>
<keyword id="KW-0689">Ribosomal protein</keyword>
<keyword id="KW-0694">RNA-binding</keyword>
<keyword id="KW-0699">rRNA-binding</keyword>
<comment type="function">
    <text evidence="1">One of the primary rRNA binding proteins, this protein initially binds near the 5'-end of the 23S rRNA. It is important during the early stages of 50S assembly. It makes multiple contacts with different domains of the 23S rRNA in the assembled 50S subunit and ribosome.</text>
</comment>
<comment type="function">
    <text evidence="1">Forms part of the polypeptide exit tunnel.</text>
</comment>
<comment type="subunit">
    <text evidence="1">Part of the 50S ribosomal subunit.</text>
</comment>
<comment type="similarity">
    <text evidence="1">Belongs to the universal ribosomal protein uL4 family.</text>
</comment>